<protein>
    <recommendedName>
        <fullName evidence="1">Quinolinate synthase</fullName>
        <ecNumber evidence="1">2.5.1.72</ecNumber>
    </recommendedName>
</protein>
<keyword id="KW-0004">4Fe-4S</keyword>
<keyword id="KW-0963">Cytoplasm</keyword>
<keyword id="KW-0408">Iron</keyword>
<keyword id="KW-0411">Iron-sulfur</keyword>
<keyword id="KW-0479">Metal-binding</keyword>
<keyword id="KW-0662">Pyridine nucleotide biosynthesis</keyword>
<keyword id="KW-1185">Reference proteome</keyword>
<keyword id="KW-0808">Transferase</keyword>
<name>NADA_YERPE</name>
<organism>
    <name type="scientific">Yersinia pestis</name>
    <dbReference type="NCBI Taxonomy" id="632"/>
    <lineage>
        <taxon>Bacteria</taxon>
        <taxon>Pseudomonadati</taxon>
        <taxon>Pseudomonadota</taxon>
        <taxon>Gammaproteobacteria</taxon>
        <taxon>Enterobacterales</taxon>
        <taxon>Yersiniaceae</taxon>
        <taxon>Yersinia</taxon>
    </lineage>
</organism>
<gene>
    <name evidence="1" type="primary">nadA</name>
    <name type="ordered locus">YPO1127</name>
    <name type="ordered locus">y3052</name>
    <name type="ordered locus">YP_1029</name>
</gene>
<feature type="chain" id="PRO_0000155778" description="Quinolinate synthase">
    <location>
        <begin position="1"/>
        <end position="353"/>
    </location>
</feature>
<feature type="binding site" evidence="1">
    <location>
        <position position="47"/>
    </location>
    <ligand>
        <name>iminosuccinate</name>
        <dbReference type="ChEBI" id="CHEBI:77875"/>
    </ligand>
</feature>
<feature type="binding site" evidence="1">
    <location>
        <position position="68"/>
    </location>
    <ligand>
        <name>iminosuccinate</name>
        <dbReference type="ChEBI" id="CHEBI:77875"/>
    </ligand>
</feature>
<feature type="binding site" evidence="1">
    <location>
        <position position="113"/>
    </location>
    <ligand>
        <name>[4Fe-4S] cluster</name>
        <dbReference type="ChEBI" id="CHEBI:49883"/>
    </ligand>
</feature>
<feature type="binding site" evidence="1">
    <location>
        <begin position="139"/>
        <end position="141"/>
    </location>
    <ligand>
        <name>iminosuccinate</name>
        <dbReference type="ChEBI" id="CHEBI:77875"/>
    </ligand>
</feature>
<feature type="binding site" evidence="1">
    <location>
        <position position="156"/>
    </location>
    <ligand>
        <name>iminosuccinate</name>
        <dbReference type="ChEBI" id="CHEBI:77875"/>
    </ligand>
</feature>
<feature type="binding site" evidence="1">
    <location>
        <position position="200"/>
    </location>
    <ligand>
        <name>[4Fe-4S] cluster</name>
        <dbReference type="ChEBI" id="CHEBI:49883"/>
    </ligand>
</feature>
<feature type="binding site" evidence="1">
    <location>
        <begin position="226"/>
        <end position="228"/>
    </location>
    <ligand>
        <name>iminosuccinate</name>
        <dbReference type="ChEBI" id="CHEBI:77875"/>
    </ligand>
</feature>
<feature type="binding site" evidence="1">
    <location>
        <position position="243"/>
    </location>
    <ligand>
        <name>iminosuccinate</name>
        <dbReference type="ChEBI" id="CHEBI:77875"/>
    </ligand>
</feature>
<feature type="binding site" evidence="1">
    <location>
        <position position="297"/>
    </location>
    <ligand>
        <name>[4Fe-4S] cluster</name>
        <dbReference type="ChEBI" id="CHEBI:49883"/>
    </ligand>
</feature>
<proteinExistence type="inferred from homology"/>
<sequence>MSEIFDVNAAIYPFPARPVPLDTNEKAFYREKIKTLLKQRDAVLVAHYYTDPEIQALAEETGGCVADSLEMARFGNNHPASTLLVAGVRFMGETAKILNPEKKVLMPTLNAECSLDLGCPVDEFTAFCDSHPDRTVVVYANTSAAVKAKADWVVTSSIAVELIEHLDSLGEKIIWAPDRHLGSYVQKKSGADVLCWQGACIVHDEFKTQALARMKALYPDAAVLVHPESPQAVVDMADAVGSTSQLIQAAKTLPQKTLIVATDRGIFYKMQQACPDKELFEAPTAGEGATCRSCAHCPWMAMNGLRAIAEGLEQGGVMHEIHVDEELRQQALIPLNRMLDFANQLKLQVKGNA</sequence>
<dbReference type="EC" id="2.5.1.72" evidence="1"/>
<dbReference type="EMBL" id="AL590842">
    <property type="protein sequence ID" value="CAL19793.1"/>
    <property type="molecule type" value="Genomic_DNA"/>
</dbReference>
<dbReference type="EMBL" id="AE009952">
    <property type="protein sequence ID" value="AAM86602.1"/>
    <property type="molecule type" value="Genomic_DNA"/>
</dbReference>
<dbReference type="EMBL" id="AE017042">
    <property type="protein sequence ID" value="AAS61279.1"/>
    <property type="molecule type" value="Genomic_DNA"/>
</dbReference>
<dbReference type="PIR" id="AG0138">
    <property type="entry name" value="AG0138"/>
</dbReference>
<dbReference type="RefSeq" id="WP_002210741.1">
    <property type="nucleotide sequence ID" value="NZ_WUCM01000016.1"/>
</dbReference>
<dbReference type="RefSeq" id="YP_002346170.1">
    <property type="nucleotide sequence ID" value="NC_003143.1"/>
</dbReference>
<dbReference type="SMR" id="Q8ZGY8"/>
<dbReference type="STRING" id="214092.YPO1127"/>
<dbReference type="PaxDb" id="214092-YPO1127"/>
<dbReference type="DNASU" id="1147999"/>
<dbReference type="EnsemblBacteria" id="AAS61279">
    <property type="protein sequence ID" value="AAS61279"/>
    <property type="gene ID" value="YP_1029"/>
</dbReference>
<dbReference type="GeneID" id="57977266"/>
<dbReference type="KEGG" id="ype:YPO1127"/>
<dbReference type="KEGG" id="ypk:y3052"/>
<dbReference type="KEGG" id="ypm:YP_1029"/>
<dbReference type="PATRIC" id="fig|214092.21.peg.1420"/>
<dbReference type="eggNOG" id="COG0379">
    <property type="taxonomic scope" value="Bacteria"/>
</dbReference>
<dbReference type="HOGENOM" id="CLU_047382_1_0_6"/>
<dbReference type="OMA" id="CFCSTMN"/>
<dbReference type="OrthoDB" id="9801204at2"/>
<dbReference type="UniPathway" id="UPA00253">
    <property type="reaction ID" value="UER00327"/>
</dbReference>
<dbReference type="Proteomes" id="UP000000815">
    <property type="component" value="Chromosome"/>
</dbReference>
<dbReference type="Proteomes" id="UP000001019">
    <property type="component" value="Chromosome"/>
</dbReference>
<dbReference type="Proteomes" id="UP000002490">
    <property type="component" value="Chromosome"/>
</dbReference>
<dbReference type="GO" id="GO:0005829">
    <property type="term" value="C:cytosol"/>
    <property type="evidence" value="ECO:0000318"/>
    <property type="project" value="GO_Central"/>
</dbReference>
<dbReference type="GO" id="GO:0051539">
    <property type="term" value="F:4 iron, 4 sulfur cluster binding"/>
    <property type="evidence" value="ECO:0000318"/>
    <property type="project" value="GO_Central"/>
</dbReference>
<dbReference type="GO" id="GO:0046872">
    <property type="term" value="F:metal ion binding"/>
    <property type="evidence" value="ECO:0007669"/>
    <property type="project" value="UniProtKB-KW"/>
</dbReference>
<dbReference type="GO" id="GO:0008987">
    <property type="term" value="F:quinolinate synthetase A activity"/>
    <property type="evidence" value="ECO:0000318"/>
    <property type="project" value="GO_Central"/>
</dbReference>
<dbReference type="GO" id="GO:0034628">
    <property type="term" value="P:'de novo' NAD biosynthetic process from L-aspartate"/>
    <property type="evidence" value="ECO:0000318"/>
    <property type="project" value="GO_Central"/>
</dbReference>
<dbReference type="FunFam" id="3.40.50.10800:FF:000003">
    <property type="entry name" value="Quinolinate synthase A"/>
    <property type="match status" value="1"/>
</dbReference>
<dbReference type="Gene3D" id="3.40.50.10800">
    <property type="entry name" value="NadA-like"/>
    <property type="match status" value="3"/>
</dbReference>
<dbReference type="HAMAP" id="MF_00567">
    <property type="entry name" value="NadA_type1"/>
    <property type="match status" value="1"/>
</dbReference>
<dbReference type="InterPro" id="IPR003473">
    <property type="entry name" value="NadA"/>
</dbReference>
<dbReference type="InterPro" id="IPR036094">
    <property type="entry name" value="NadA_sf"/>
</dbReference>
<dbReference type="InterPro" id="IPR023513">
    <property type="entry name" value="Quinolinate_synth_A_type1"/>
</dbReference>
<dbReference type="NCBIfam" id="TIGR00550">
    <property type="entry name" value="nadA"/>
    <property type="match status" value="1"/>
</dbReference>
<dbReference type="NCBIfam" id="NF006877">
    <property type="entry name" value="PRK09375.1-1"/>
    <property type="match status" value="1"/>
</dbReference>
<dbReference type="NCBIfam" id="NF006878">
    <property type="entry name" value="PRK09375.1-2"/>
    <property type="match status" value="1"/>
</dbReference>
<dbReference type="PANTHER" id="PTHR30573:SF0">
    <property type="entry name" value="QUINOLINATE SYNTHASE, CHLOROPLASTIC"/>
    <property type="match status" value="1"/>
</dbReference>
<dbReference type="PANTHER" id="PTHR30573">
    <property type="entry name" value="QUINOLINATE SYNTHETASE A"/>
    <property type="match status" value="1"/>
</dbReference>
<dbReference type="Pfam" id="PF02445">
    <property type="entry name" value="NadA"/>
    <property type="match status" value="1"/>
</dbReference>
<dbReference type="SUPFAM" id="SSF142754">
    <property type="entry name" value="NadA-like"/>
    <property type="match status" value="1"/>
</dbReference>
<comment type="function">
    <text evidence="1">Catalyzes the condensation of iminoaspartate with dihydroxyacetone phosphate to form quinolinate.</text>
</comment>
<comment type="catalytic activity">
    <reaction evidence="1">
        <text>iminosuccinate + dihydroxyacetone phosphate = quinolinate + phosphate + 2 H2O + H(+)</text>
        <dbReference type="Rhea" id="RHEA:25888"/>
        <dbReference type="ChEBI" id="CHEBI:15377"/>
        <dbReference type="ChEBI" id="CHEBI:15378"/>
        <dbReference type="ChEBI" id="CHEBI:29959"/>
        <dbReference type="ChEBI" id="CHEBI:43474"/>
        <dbReference type="ChEBI" id="CHEBI:57642"/>
        <dbReference type="ChEBI" id="CHEBI:77875"/>
        <dbReference type="EC" id="2.5.1.72"/>
    </reaction>
    <physiologicalReaction direction="left-to-right" evidence="1">
        <dbReference type="Rhea" id="RHEA:25889"/>
    </physiologicalReaction>
</comment>
<comment type="cofactor">
    <cofactor evidence="1">
        <name>[4Fe-4S] cluster</name>
        <dbReference type="ChEBI" id="CHEBI:49883"/>
    </cofactor>
    <text evidence="1">Binds 1 [4Fe-4S] cluster per subunit.</text>
</comment>
<comment type="pathway">
    <text evidence="1">Cofactor biosynthesis; NAD(+) biosynthesis; quinolinate from iminoaspartate: step 1/1.</text>
</comment>
<comment type="subcellular location">
    <subcellularLocation>
        <location evidence="1">Cytoplasm</location>
    </subcellularLocation>
</comment>
<comment type="similarity">
    <text evidence="1">Belongs to the quinolinate synthase family. Type 1 subfamily.</text>
</comment>
<evidence type="ECO:0000255" key="1">
    <source>
        <dbReference type="HAMAP-Rule" id="MF_00567"/>
    </source>
</evidence>
<reference key="1">
    <citation type="journal article" date="2001" name="Nature">
        <title>Genome sequence of Yersinia pestis, the causative agent of plague.</title>
        <authorList>
            <person name="Parkhill J."/>
            <person name="Wren B.W."/>
            <person name="Thomson N.R."/>
            <person name="Titball R.W."/>
            <person name="Holden M.T.G."/>
            <person name="Prentice M.B."/>
            <person name="Sebaihia M."/>
            <person name="James K.D."/>
            <person name="Churcher C.M."/>
            <person name="Mungall K.L."/>
            <person name="Baker S."/>
            <person name="Basham D."/>
            <person name="Bentley S.D."/>
            <person name="Brooks K."/>
            <person name="Cerdeno-Tarraga A.-M."/>
            <person name="Chillingworth T."/>
            <person name="Cronin A."/>
            <person name="Davies R.M."/>
            <person name="Davis P."/>
            <person name="Dougan G."/>
            <person name="Feltwell T."/>
            <person name="Hamlin N."/>
            <person name="Holroyd S."/>
            <person name="Jagels K."/>
            <person name="Karlyshev A.V."/>
            <person name="Leather S."/>
            <person name="Moule S."/>
            <person name="Oyston P.C.F."/>
            <person name="Quail M.A."/>
            <person name="Rutherford K.M."/>
            <person name="Simmonds M."/>
            <person name="Skelton J."/>
            <person name="Stevens K."/>
            <person name="Whitehead S."/>
            <person name="Barrell B.G."/>
        </authorList>
    </citation>
    <scope>NUCLEOTIDE SEQUENCE [LARGE SCALE GENOMIC DNA]</scope>
    <source>
        <strain>CO-92 / Biovar Orientalis</strain>
    </source>
</reference>
<reference key="2">
    <citation type="journal article" date="2002" name="J. Bacteriol.">
        <title>Genome sequence of Yersinia pestis KIM.</title>
        <authorList>
            <person name="Deng W."/>
            <person name="Burland V."/>
            <person name="Plunkett G. III"/>
            <person name="Boutin A."/>
            <person name="Mayhew G.F."/>
            <person name="Liss P."/>
            <person name="Perna N.T."/>
            <person name="Rose D.J."/>
            <person name="Mau B."/>
            <person name="Zhou S."/>
            <person name="Schwartz D.C."/>
            <person name="Fetherston J.D."/>
            <person name="Lindler L.E."/>
            <person name="Brubaker R.R."/>
            <person name="Plano G.V."/>
            <person name="Straley S.C."/>
            <person name="McDonough K.A."/>
            <person name="Nilles M.L."/>
            <person name="Matson J.S."/>
            <person name="Blattner F.R."/>
            <person name="Perry R.D."/>
        </authorList>
    </citation>
    <scope>NUCLEOTIDE SEQUENCE [LARGE SCALE GENOMIC DNA]</scope>
    <source>
        <strain>KIM10+ / Biovar Mediaevalis</strain>
    </source>
</reference>
<reference key="3">
    <citation type="journal article" date="2004" name="DNA Res.">
        <title>Complete genome sequence of Yersinia pestis strain 91001, an isolate avirulent to humans.</title>
        <authorList>
            <person name="Song Y."/>
            <person name="Tong Z."/>
            <person name="Wang J."/>
            <person name="Wang L."/>
            <person name="Guo Z."/>
            <person name="Han Y."/>
            <person name="Zhang J."/>
            <person name="Pei D."/>
            <person name="Zhou D."/>
            <person name="Qin H."/>
            <person name="Pang X."/>
            <person name="Han Y."/>
            <person name="Zhai J."/>
            <person name="Li M."/>
            <person name="Cui B."/>
            <person name="Qi Z."/>
            <person name="Jin L."/>
            <person name="Dai R."/>
            <person name="Chen F."/>
            <person name="Li S."/>
            <person name="Ye C."/>
            <person name="Du Z."/>
            <person name="Lin W."/>
            <person name="Wang J."/>
            <person name="Yu J."/>
            <person name="Yang H."/>
            <person name="Wang J."/>
            <person name="Huang P."/>
            <person name="Yang R."/>
        </authorList>
    </citation>
    <scope>NUCLEOTIDE SEQUENCE [LARGE SCALE GENOMIC DNA]</scope>
    <source>
        <strain>91001 / Biovar Mediaevalis</strain>
    </source>
</reference>
<accession>Q8ZGY8</accession>
<accession>Q0WHR8</accession>